<dbReference type="EMBL" id="CP002685">
    <property type="protein sequence ID" value="AEC06693.1"/>
    <property type="molecule type" value="Genomic_DNA"/>
</dbReference>
<dbReference type="EMBL" id="AF325067">
    <property type="protein sequence ID" value="AAK17135.1"/>
    <property type="molecule type" value="mRNA"/>
</dbReference>
<dbReference type="EMBL" id="AF428331">
    <property type="protein sequence ID" value="AAL16261.1"/>
    <property type="molecule type" value="mRNA"/>
</dbReference>
<dbReference type="EMBL" id="AY081319">
    <property type="protein sequence ID" value="AAL91208.1"/>
    <property type="molecule type" value="mRNA"/>
</dbReference>
<dbReference type="EMBL" id="BT001230">
    <property type="protein sequence ID" value="AAN65117.1"/>
    <property type="molecule type" value="mRNA"/>
</dbReference>
<dbReference type="EMBL" id="AY088062">
    <property type="protein sequence ID" value="AAM65608.1"/>
    <property type="molecule type" value="mRNA"/>
</dbReference>
<dbReference type="EMBL" id="AB039929">
    <property type="protein sequence ID" value="BAB63916.1"/>
    <property type="molecule type" value="mRNA"/>
</dbReference>
<dbReference type="PIR" id="T00840">
    <property type="entry name" value="T00840"/>
</dbReference>
<dbReference type="RefSeq" id="NP_179374.1">
    <property type="nucleotide sequence ID" value="NM_127337.3"/>
</dbReference>
<dbReference type="FunCoup" id="O48832">
    <property type="interactions" value="717"/>
</dbReference>
<dbReference type="STRING" id="3702.O48832"/>
<dbReference type="iPTMnet" id="O48832"/>
<dbReference type="PaxDb" id="3702-AT2G17840.1"/>
<dbReference type="ProteomicsDB" id="220778"/>
<dbReference type="EnsemblPlants" id="AT2G17840.1">
    <property type="protein sequence ID" value="AT2G17840.1"/>
    <property type="gene ID" value="AT2G17840"/>
</dbReference>
<dbReference type="GeneID" id="816293"/>
<dbReference type="Gramene" id="AT2G17840.1">
    <property type="protein sequence ID" value="AT2G17840.1"/>
    <property type="gene ID" value="AT2G17840"/>
</dbReference>
<dbReference type="KEGG" id="ath:AT2G17840"/>
<dbReference type="Araport" id="AT2G17840"/>
<dbReference type="TAIR" id="AT2G17840">
    <property type="gene designation" value="ERD7"/>
</dbReference>
<dbReference type="eggNOG" id="ENOG502QPY0">
    <property type="taxonomic scope" value="Eukaryota"/>
</dbReference>
<dbReference type="HOGENOM" id="CLU_034602_0_0_1"/>
<dbReference type="InParanoid" id="O48832"/>
<dbReference type="PhylomeDB" id="O48832"/>
<dbReference type="PRO" id="PR:O48832"/>
<dbReference type="Proteomes" id="UP000006548">
    <property type="component" value="Chromosome 2"/>
</dbReference>
<dbReference type="ExpressionAtlas" id="O48832">
    <property type="expression patterns" value="baseline and differential"/>
</dbReference>
<dbReference type="GO" id="GO:0009507">
    <property type="term" value="C:chloroplast"/>
    <property type="evidence" value="ECO:0007669"/>
    <property type="project" value="UniProtKB-SubCell"/>
</dbReference>
<dbReference type="GO" id="GO:0005886">
    <property type="term" value="C:plasma membrane"/>
    <property type="evidence" value="ECO:0007005"/>
    <property type="project" value="TAIR"/>
</dbReference>
<dbReference type="GO" id="GO:0007623">
    <property type="term" value="P:circadian rhythm"/>
    <property type="evidence" value="ECO:0000270"/>
    <property type="project" value="UniProtKB"/>
</dbReference>
<dbReference type="GO" id="GO:0009737">
    <property type="term" value="P:response to abscisic acid"/>
    <property type="evidence" value="ECO:0000270"/>
    <property type="project" value="UniProtKB"/>
</dbReference>
<dbReference type="GO" id="GO:0009409">
    <property type="term" value="P:response to cold"/>
    <property type="evidence" value="ECO:0000270"/>
    <property type="project" value="TAIR"/>
</dbReference>
<dbReference type="GO" id="GO:0009644">
    <property type="term" value="P:response to high light intensity"/>
    <property type="evidence" value="ECO:0000270"/>
    <property type="project" value="TAIR"/>
</dbReference>
<dbReference type="GO" id="GO:0009651">
    <property type="term" value="P:response to salt stress"/>
    <property type="evidence" value="ECO:0000270"/>
    <property type="project" value="TAIR"/>
</dbReference>
<dbReference type="GO" id="GO:0009414">
    <property type="term" value="P:response to water deprivation"/>
    <property type="evidence" value="ECO:0000270"/>
    <property type="project" value="TAIR"/>
</dbReference>
<dbReference type="InterPro" id="IPR009686">
    <property type="entry name" value="Senescence/spartin_C"/>
</dbReference>
<dbReference type="InterPro" id="IPR045036">
    <property type="entry name" value="Spartin-like"/>
</dbReference>
<dbReference type="PANTHER" id="PTHR21068:SF45">
    <property type="entry name" value="PROTEIN EARLY-RESPONSIVE TO DEHYDRATION 7, CHLOROPLASTIC"/>
    <property type="match status" value="1"/>
</dbReference>
<dbReference type="PANTHER" id="PTHR21068">
    <property type="entry name" value="SPARTIN"/>
    <property type="match status" value="1"/>
</dbReference>
<dbReference type="Pfam" id="PF06911">
    <property type="entry name" value="Senescence"/>
    <property type="match status" value="1"/>
</dbReference>
<sequence>MESSGDKQTSSLYPTVDTSNPEAPINPSSSSSTNNLYPSLDMNDLARNLFPEQPETSSIPVSAPPAATEEVILKISGAILHLIDKSYSVELACGDLEIIRIVQGENVVAVLASVSDEIQWPLTKDENSVKVDESHYFFTLRPTKEISHDSSDEEDGDGGKNTNEMLNYGLTIASKGQEHLLVELEKILEDYSSFSVQEVSEEAKEAGEKVLDVTVARETSPVELTGERKEIVERQCSAYWTTLAPNVEDYSGKAAKLIATGSGHLIKGILWCGDVTMDRLIWGNGFMKRRLSKAEKESEVHPDTLKRIRRVKRMTKMTESVANSILSGVLKVSGFFTSSVANTKVGKKFFSLLPGEVILASLDGFNKVCDAVEVAGRNVMSTSSTVTTELVDHKYGGKAAEATNEGLDAAGYALGTAWVAFKIRKAINPKSVLKPSTLAKTAIRSAASQKKA</sequence>
<gene>
    <name evidence="6" type="primary">ERD7</name>
    <name evidence="8" type="ordered locus">At2g17840</name>
    <name evidence="7" type="ORF">T13L16.14</name>
</gene>
<keyword id="KW-0150">Chloroplast</keyword>
<keyword id="KW-0934">Plastid</keyword>
<keyword id="KW-1185">Reference proteome</keyword>
<keyword id="KW-0809">Transit peptide</keyword>
<comment type="subcellular location">
    <subcellularLocation>
        <location evidence="1">Plastid</location>
        <location evidence="1">Chloroplast</location>
    </subcellularLocation>
</comment>
<comment type="induction">
    <text evidence="3 4 5">Diurnally oscillating levels. Induced by abscisic acid (ABA) (PubMed:18202002). Regulated indirectly by CAMTA1, probably via a DREB/ERF pathway (PubMed:23547968). Accumulates during dehydration stress (PubMed:8075396).</text>
</comment>
<name>ERD7_ARATH</name>
<evidence type="ECO:0000255" key="1"/>
<evidence type="ECO:0000256" key="2">
    <source>
        <dbReference type="SAM" id="MobiDB-lite"/>
    </source>
</evidence>
<evidence type="ECO:0000269" key="3">
    <source>
    </source>
</evidence>
<evidence type="ECO:0000269" key="4">
    <source>
    </source>
</evidence>
<evidence type="ECO:0000269" key="5">
    <source>
    </source>
</evidence>
<evidence type="ECO:0000303" key="6">
    <source>
    </source>
</evidence>
<evidence type="ECO:0000305" key="7"/>
<evidence type="ECO:0000312" key="8">
    <source>
        <dbReference type="Araport" id="AT2G17840"/>
    </source>
</evidence>
<feature type="transit peptide" description="Chloroplast" evidence="1">
    <location>
        <begin position="1"/>
        <end position="28"/>
    </location>
</feature>
<feature type="chain" id="PRO_0000436971" description="Protein EARLY-RESPONSIVE TO DEHYDRATION 7, chloroplastic">
    <location>
        <begin position="29"/>
        <end position="452"/>
    </location>
</feature>
<feature type="domain" description="Senescence" evidence="1">
    <location>
        <begin position="258"/>
        <end position="426"/>
    </location>
</feature>
<feature type="region of interest" description="Disordered" evidence="2">
    <location>
        <begin position="1"/>
        <end position="37"/>
    </location>
</feature>
<feature type="compositionally biased region" description="Polar residues" evidence="2">
    <location>
        <begin position="1"/>
        <end position="18"/>
    </location>
</feature>
<feature type="compositionally biased region" description="Low complexity" evidence="2">
    <location>
        <begin position="19"/>
        <end position="37"/>
    </location>
</feature>
<feature type="sequence conflict" description="In Ref. 5; BAB63916." evidence="7" ref="5">
    <original>KL</original>
    <variation>NV</variation>
    <location>
        <begin position="256"/>
        <end position="257"/>
    </location>
</feature>
<feature type="sequence conflict" description="In Ref. 4; AAM65608." evidence="7" ref="4">
    <original>G</original>
    <variation>R</variation>
    <location>
        <position position="268"/>
    </location>
</feature>
<feature type="sequence conflict" description="In Ref. 4; AAM65608." evidence="7" ref="4">
    <original>M</original>
    <variation>I</variation>
    <location>
        <position position="314"/>
    </location>
</feature>
<feature type="sequence conflict" description="In Ref. 5; BAB63916." evidence="7" ref="5">
    <original>A</original>
    <variation>PSKAA</variation>
    <location>
        <position position="452"/>
    </location>
</feature>
<accession>O48832</accession>
<accession>Q8LA30</accession>
<accession>Q94II1</accession>
<organism>
    <name type="scientific">Arabidopsis thaliana</name>
    <name type="common">Mouse-ear cress</name>
    <dbReference type="NCBI Taxonomy" id="3702"/>
    <lineage>
        <taxon>Eukaryota</taxon>
        <taxon>Viridiplantae</taxon>
        <taxon>Streptophyta</taxon>
        <taxon>Embryophyta</taxon>
        <taxon>Tracheophyta</taxon>
        <taxon>Spermatophyta</taxon>
        <taxon>Magnoliopsida</taxon>
        <taxon>eudicotyledons</taxon>
        <taxon>Gunneridae</taxon>
        <taxon>Pentapetalae</taxon>
        <taxon>rosids</taxon>
        <taxon>malvids</taxon>
        <taxon>Brassicales</taxon>
        <taxon>Brassicaceae</taxon>
        <taxon>Camelineae</taxon>
        <taxon>Arabidopsis</taxon>
    </lineage>
</organism>
<protein>
    <recommendedName>
        <fullName evidence="6">Protein EARLY-RESPONSIVE TO DEHYDRATION 7, chloroplastic</fullName>
    </recommendedName>
</protein>
<reference key="1">
    <citation type="journal article" date="1999" name="Nature">
        <title>Sequence and analysis of chromosome 2 of the plant Arabidopsis thaliana.</title>
        <authorList>
            <person name="Lin X."/>
            <person name="Kaul S."/>
            <person name="Rounsley S.D."/>
            <person name="Shea T.P."/>
            <person name="Benito M.-I."/>
            <person name="Town C.D."/>
            <person name="Fujii C.Y."/>
            <person name="Mason T.M."/>
            <person name="Bowman C.L."/>
            <person name="Barnstead M.E."/>
            <person name="Feldblyum T.V."/>
            <person name="Buell C.R."/>
            <person name="Ketchum K.A."/>
            <person name="Lee J.J."/>
            <person name="Ronning C.M."/>
            <person name="Koo H.L."/>
            <person name="Moffat K.S."/>
            <person name="Cronin L.A."/>
            <person name="Shen M."/>
            <person name="Pai G."/>
            <person name="Van Aken S."/>
            <person name="Umayam L."/>
            <person name="Tallon L.J."/>
            <person name="Gill J.E."/>
            <person name="Adams M.D."/>
            <person name="Carrera A.J."/>
            <person name="Creasy T.H."/>
            <person name="Goodman H.M."/>
            <person name="Somerville C.R."/>
            <person name="Copenhaver G.P."/>
            <person name="Preuss D."/>
            <person name="Nierman W.C."/>
            <person name="White O."/>
            <person name="Eisen J.A."/>
            <person name="Salzberg S.L."/>
            <person name="Fraser C.M."/>
            <person name="Venter J.C."/>
        </authorList>
    </citation>
    <scope>NUCLEOTIDE SEQUENCE [LARGE SCALE GENOMIC DNA]</scope>
    <source>
        <strain>cv. Columbia</strain>
    </source>
</reference>
<reference key="2">
    <citation type="journal article" date="2017" name="Plant J.">
        <title>Araport11: a complete reannotation of the Arabidopsis thaliana reference genome.</title>
        <authorList>
            <person name="Cheng C.Y."/>
            <person name="Krishnakumar V."/>
            <person name="Chan A.P."/>
            <person name="Thibaud-Nissen F."/>
            <person name="Schobel S."/>
            <person name="Town C.D."/>
        </authorList>
    </citation>
    <scope>GENOME REANNOTATION</scope>
    <source>
        <strain>cv. Columbia</strain>
    </source>
</reference>
<reference key="3">
    <citation type="journal article" date="2003" name="Science">
        <title>Empirical analysis of transcriptional activity in the Arabidopsis genome.</title>
        <authorList>
            <person name="Yamada K."/>
            <person name="Lim J."/>
            <person name="Dale J.M."/>
            <person name="Chen H."/>
            <person name="Shinn P."/>
            <person name="Palm C.J."/>
            <person name="Southwick A.M."/>
            <person name="Wu H.C."/>
            <person name="Kim C.J."/>
            <person name="Nguyen M."/>
            <person name="Pham P.K."/>
            <person name="Cheuk R.F."/>
            <person name="Karlin-Newmann G."/>
            <person name="Liu S.X."/>
            <person name="Lam B."/>
            <person name="Sakano H."/>
            <person name="Wu T."/>
            <person name="Yu G."/>
            <person name="Miranda M."/>
            <person name="Quach H.L."/>
            <person name="Tripp M."/>
            <person name="Chang C.H."/>
            <person name="Lee J.M."/>
            <person name="Toriumi M.J."/>
            <person name="Chan M.M."/>
            <person name="Tang C.C."/>
            <person name="Onodera C.S."/>
            <person name="Deng J.M."/>
            <person name="Akiyama K."/>
            <person name="Ansari Y."/>
            <person name="Arakawa T."/>
            <person name="Banh J."/>
            <person name="Banno F."/>
            <person name="Bowser L."/>
            <person name="Brooks S.Y."/>
            <person name="Carninci P."/>
            <person name="Chao Q."/>
            <person name="Choy N."/>
            <person name="Enju A."/>
            <person name="Goldsmith A.D."/>
            <person name="Gurjal M."/>
            <person name="Hansen N.F."/>
            <person name="Hayashizaki Y."/>
            <person name="Johnson-Hopson C."/>
            <person name="Hsuan V.W."/>
            <person name="Iida K."/>
            <person name="Karnes M."/>
            <person name="Khan S."/>
            <person name="Koesema E."/>
            <person name="Ishida J."/>
            <person name="Jiang P.X."/>
            <person name="Jones T."/>
            <person name="Kawai J."/>
            <person name="Kamiya A."/>
            <person name="Meyers C."/>
            <person name="Nakajima M."/>
            <person name="Narusaka M."/>
            <person name="Seki M."/>
            <person name="Sakurai T."/>
            <person name="Satou M."/>
            <person name="Tamse R."/>
            <person name="Vaysberg M."/>
            <person name="Wallender E.K."/>
            <person name="Wong C."/>
            <person name="Yamamura Y."/>
            <person name="Yuan S."/>
            <person name="Shinozaki K."/>
            <person name="Davis R.W."/>
            <person name="Theologis A."/>
            <person name="Ecker J.R."/>
        </authorList>
    </citation>
    <scope>NUCLEOTIDE SEQUENCE [LARGE SCALE MRNA]</scope>
    <source>
        <strain>cv. Columbia</strain>
    </source>
</reference>
<reference key="4">
    <citation type="submission" date="2002-03" db="EMBL/GenBank/DDBJ databases">
        <title>Full-length cDNA from Arabidopsis thaliana.</title>
        <authorList>
            <person name="Brover V.V."/>
            <person name="Troukhan M.E."/>
            <person name="Alexandrov N.A."/>
            <person name="Lu Y.-P."/>
            <person name="Flavell R.B."/>
            <person name="Feldmann K.A."/>
        </authorList>
    </citation>
    <scope>NUCLEOTIDE SEQUENCE [LARGE SCALE MRNA]</scope>
</reference>
<reference key="5">
    <citation type="journal article" date="1994" name="Plant Mol. Biol.">
        <title>Cloning of cDNAs for genes that are early-responsive to dehydration stress (ERDs) in Arabidopsis thaliana L.: identification of three ERDs as HSP cognate genes.</title>
        <authorList>
            <person name="Kiyosue T."/>
            <person name="Yamaguchi-shinozaki K."/>
            <person name="Shinozaki K."/>
        </authorList>
    </citation>
    <scope>NUCLEOTIDE SEQUENCE [MRNA] OF 16-452</scope>
    <scope>INDUCTION BY DEHYDRATION STRESS</scope>
    <source>
        <strain>cv. Columbia</strain>
    </source>
</reference>
<reference key="6">
    <citation type="journal article" date="2008" name="Plant Cell Physiol.">
        <title>Comparative transcriptome of diurnally oscillating genes and hormone-responsive genes in Arabidopsis thaliana: insight into circadian clock-controlled daily responses to common ambient stresses in plants.</title>
        <authorList>
            <person name="Mizuno T."/>
            <person name="Yamashino T."/>
        </authorList>
    </citation>
    <scope>INDUCTION BY ABSCISIC ACID</scope>
</reference>
<reference key="7">
    <citation type="journal article" date="2009" name="Plant Physiol.">
        <title>Large-scale Arabidopsis phosphoproteome profiling reveals novel chloroplast kinase substrates and phosphorylation networks.</title>
        <authorList>
            <person name="Reiland S."/>
            <person name="Messerli G."/>
            <person name="Baerenfaller K."/>
            <person name="Gerrits B."/>
            <person name="Endler A."/>
            <person name="Grossmann J."/>
            <person name="Gruissem W."/>
            <person name="Baginsky S."/>
        </authorList>
    </citation>
    <scope>IDENTIFICATION BY MASS SPECTROMETRY [LARGE SCALE ANALYSIS]</scope>
</reference>
<reference key="8">
    <citation type="journal article" date="2013" name="BMC Genomics">
        <title>CAMTA 1 regulates drought responses in Arabidopsis thaliana.</title>
        <authorList>
            <person name="Pandey N."/>
            <person name="Ranjan A."/>
            <person name="Pant P."/>
            <person name="Tripathi R.K."/>
            <person name="Ateek F."/>
            <person name="Pandey H.P."/>
            <person name="Patre U.V."/>
            <person name="Sawant S.V."/>
        </authorList>
    </citation>
    <scope>INDUCTION BY CAMTA1</scope>
    <source>
        <strain>cv. Columbia</strain>
    </source>
</reference>
<proteinExistence type="evidence at protein level"/>